<gene>
    <name evidence="1" type="primary">argS</name>
    <name type="ordered locus">XCC3861</name>
</gene>
<organism>
    <name type="scientific">Xanthomonas campestris pv. campestris (strain ATCC 33913 / DSM 3586 / NCPPB 528 / LMG 568 / P 25)</name>
    <dbReference type="NCBI Taxonomy" id="190485"/>
    <lineage>
        <taxon>Bacteria</taxon>
        <taxon>Pseudomonadati</taxon>
        <taxon>Pseudomonadota</taxon>
        <taxon>Gammaproteobacteria</taxon>
        <taxon>Lysobacterales</taxon>
        <taxon>Lysobacteraceae</taxon>
        <taxon>Xanthomonas</taxon>
    </lineage>
</organism>
<proteinExistence type="inferred from homology"/>
<accession>Q8P455</accession>
<dbReference type="EC" id="6.1.1.19" evidence="1"/>
<dbReference type="EMBL" id="AE008922">
    <property type="protein sequence ID" value="AAM43092.1"/>
    <property type="molecule type" value="Genomic_DNA"/>
</dbReference>
<dbReference type="RefSeq" id="NP_639201.1">
    <property type="nucleotide sequence ID" value="NC_003902.1"/>
</dbReference>
<dbReference type="RefSeq" id="WP_011038936.1">
    <property type="nucleotide sequence ID" value="NC_003902.1"/>
</dbReference>
<dbReference type="SMR" id="Q8P455"/>
<dbReference type="STRING" id="190485.XCC3861"/>
<dbReference type="EnsemblBacteria" id="AAM43092">
    <property type="protein sequence ID" value="AAM43092"/>
    <property type="gene ID" value="XCC3861"/>
</dbReference>
<dbReference type="GeneID" id="58015152"/>
<dbReference type="KEGG" id="xcc:XCC3861"/>
<dbReference type="PATRIC" id="fig|190485.4.peg.4130"/>
<dbReference type="eggNOG" id="COG0018">
    <property type="taxonomic scope" value="Bacteria"/>
</dbReference>
<dbReference type="HOGENOM" id="CLU_006406_0_1_6"/>
<dbReference type="OrthoDB" id="9803211at2"/>
<dbReference type="Proteomes" id="UP000001010">
    <property type="component" value="Chromosome"/>
</dbReference>
<dbReference type="GO" id="GO:0005737">
    <property type="term" value="C:cytoplasm"/>
    <property type="evidence" value="ECO:0007669"/>
    <property type="project" value="UniProtKB-SubCell"/>
</dbReference>
<dbReference type="GO" id="GO:0004814">
    <property type="term" value="F:arginine-tRNA ligase activity"/>
    <property type="evidence" value="ECO:0000318"/>
    <property type="project" value="GO_Central"/>
</dbReference>
<dbReference type="GO" id="GO:0005524">
    <property type="term" value="F:ATP binding"/>
    <property type="evidence" value="ECO:0007669"/>
    <property type="project" value="UniProtKB-UniRule"/>
</dbReference>
<dbReference type="GO" id="GO:0006420">
    <property type="term" value="P:arginyl-tRNA aminoacylation"/>
    <property type="evidence" value="ECO:0000318"/>
    <property type="project" value="GO_Central"/>
</dbReference>
<dbReference type="CDD" id="cd00671">
    <property type="entry name" value="ArgRS_core"/>
    <property type="match status" value="1"/>
</dbReference>
<dbReference type="FunFam" id="1.10.730.10:FF:000008">
    <property type="entry name" value="Arginine--tRNA ligase"/>
    <property type="match status" value="1"/>
</dbReference>
<dbReference type="FunFam" id="3.30.1360.70:FF:000003">
    <property type="entry name" value="Arginine--tRNA ligase"/>
    <property type="match status" value="1"/>
</dbReference>
<dbReference type="FunFam" id="3.40.50.620:FF:000062">
    <property type="entry name" value="Arginine--tRNA ligase"/>
    <property type="match status" value="1"/>
</dbReference>
<dbReference type="Gene3D" id="3.30.1360.70">
    <property type="entry name" value="Arginyl tRNA synthetase N-terminal domain"/>
    <property type="match status" value="1"/>
</dbReference>
<dbReference type="Gene3D" id="3.40.50.620">
    <property type="entry name" value="HUPs"/>
    <property type="match status" value="1"/>
</dbReference>
<dbReference type="Gene3D" id="1.10.730.10">
    <property type="entry name" value="Isoleucyl-tRNA Synthetase, Domain 1"/>
    <property type="match status" value="1"/>
</dbReference>
<dbReference type="HAMAP" id="MF_00123">
    <property type="entry name" value="Arg_tRNA_synth"/>
    <property type="match status" value="1"/>
</dbReference>
<dbReference type="InterPro" id="IPR001412">
    <property type="entry name" value="aa-tRNA-synth_I_CS"/>
</dbReference>
<dbReference type="InterPro" id="IPR001278">
    <property type="entry name" value="Arg-tRNA-ligase"/>
</dbReference>
<dbReference type="InterPro" id="IPR005148">
    <property type="entry name" value="Arg-tRNA-synth_N"/>
</dbReference>
<dbReference type="InterPro" id="IPR036695">
    <property type="entry name" value="Arg-tRNA-synth_N_sf"/>
</dbReference>
<dbReference type="InterPro" id="IPR035684">
    <property type="entry name" value="ArgRS_core"/>
</dbReference>
<dbReference type="InterPro" id="IPR008909">
    <property type="entry name" value="DALR_anticod-bd"/>
</dbReference>
<dbReference type="InterPro" id="IPR014729">
    <property type="entry name" value="Rossmann-like_a/b/a_fold"/>
</dbReference>
<dbReference type="InterPro" id="IPR009080">
    <property type="entry name" value="tRNAsynth_Ia_anticodon-bd"/>
</dbReference>
<dbReference type="NCBIfam" id="TIGR00456">
    <property type="entry name" value="argS"/>
    <property type="match status" value="1"/>
</dbReference>
<dbReference type="PANTHER" id="PTHR11956:SF5">
    <property type="entry name" value="ARGININE--TRNA LIGASE, CYTOPLASMIC"/>
    <property type="match status" value="1"/>
</dbReference>
<dbReference type="PANTHER" id="PTHR11956">
    <property type="entry name" value="ARGINYL-TRNA SYNTHETASE"/>
    <property type="match status" value="1"/>
</dbReference>
<dbReference type="Pfam" id="PF03485">
    <property type="entry name" value="Arg_tRNA_synt_N"/>
    <property type="match status" value="1"/>
</dbReference>
<dbReference type="Pfam" id="PF05746">
    <property type="entry name" value="DALR_1"/>
    <property type="match status" value="1"/>
</dbReference>
<dbReference type="Pfam" id="PF00750">
    <property type="entry name" value="tRNA-synt_1d"/>
    <property type="match status" value="1"/>
</dbReference>
<dbReference type="PRINTS" id="PR01038">
    <property type="entry name" value="TRNASYNTHARG"/>
</dbReference>
<dbReference type="SMART" id="SM01016">
    <property type="entry name" value="Arg_tRNA_synt_N"/>
    <property type="match status" value="1"/>
</dbReference>
<dbReference type="SMART" id="SM00836">
    <property type="entry name" value="DALR_1"/>
    <property type="match status" value="1"/>
</dbReference>
<dbReference type="SUPFAM" id="SSF47323">
    <property type="entry name" value="Anticodon-binding domain of a subclass of class I aminoacyl-tRNA synthetases"/>
    <property type="match status" value="1"/>
</dbReference>
<dbReference type="SUPFAM" id="SSF55190">
    <property type="entry name" value="Arginyl-tRNA synthetase (ArgRS), N-terminal 'additional' domain"/>
    <property type="match status" value="1"/>
</dbReference>
<dbReference type="SUPFAM" id="SSF52374">
    <property type="entry name" value="Nucleotidylyl transferase"/>
    <property type="match status" value="1"/>
</dbReference>
<dbReference type="PROSITE" id="PS00178">
    <property type="entry name" value="AA_TRNA_LIGASE_I"/>
    <property type="match status" value="1"/>
</dbReference>
<sequence>MKAQLRALIGQGIEALRANGTLPADTLPPDFVVERPKTREHGDFATNAAMLLAKAARSNPRALAQALLAALPASDDVARVEIAGPGFINFHLTPAAYQREVIHVIKQGHDYGRGLAGNGRSVGVEYVSANPTGPLHVGHGRAAAIGDSLARVLDANGWNVKREFYYNDAGVQIENLALSVQARAQGLTPDSAGWPENGYRGDYIADVAKAYLAGDTVDLEGHLVTGTKDPADLESIRRFAVAYLRNEQNHDLAAFRVDFDIYFLESSLYKDGKVDEAVQKLIASGHTYEEGGALWLKSTDFGDDKDRVMRKSDGTYTYFVPDVAYHLTKWQRGYERAITELGADHHGSLTRVRAGLQAMELGIPQGWPEYVLHQMVTVMRGGEEVKLSKRAGSYVTLRDLIEETSADAVRWFLIARKPDSQLTFDIDLARAQSNDNPVFYVQYAHARVCSVLRQAQEKGLKYDQTHGMAELARLDDEHSLALMLELSRYAEVVELAGQTLEPYQIAQYLRELAHAFHTWYHNSKVLVDDAAERDAKLTLAVATQQVLANGLELLGVSAPEKM</sequence>
<protein>
    <recommendedName>
        <fullName evidence="1">Arginine--tRNA ligase</fullName>
        <ecNumber evidence="1">6.1.1.19</ecNumber>
    </recommendedName>
    <alternativeName>
        <fullName evidence="1">Arginyl-tRNA synthetase</fullName>
        <shortName evidence="1">ArgRS</shortName>
    </alternativeName>
</protein>
<evidence type="ECO:0000255" key="1">
    <source>
        <dbReference type="HAMAP-Rule" id="MF_00123"/>
    </source>
</evidence>
<feature type="chain" id="PRO_0000151638" description="Arginine--tRNA ligase">
    <location>
        <begin position="1"/>
        <end position="562"/>
    </location>
</feature>
<feature type="short sequence motif" description="'HIGH' region">
    <location>
        <begin position="129"/>
        <end position="139"/>
    </location>
</feature>
<name>SYR_XANCP</name>
<keyword id="KW-0030">Aminoacyl-tRNA synthetase</keyword>
<keyword id="KW-0067">ATP-binding</keyword>
<keyword id="KW-0963">Cytoplasm</keyword>
<keyword id="KW-0436">Ligase</keyword>
<keyword id="KW-0547">Nucleotide-binding</keyword>
<keyword id="KW-0648">Protein biosynthesis</keyword>
<keyword id="KW-1185">Reference proteome</keyword>
<comment type="catalytic activity">
    <reaction evidence="1">
        <text>tRNA(Arg) + L-arginine + ATP = L-arginyl-tRNA(Arg) + AMP + diphosphate</text>
        <dbReference type="Rhea" id="RHEA:20301"/>
        <dbReference type="Rhea" id="RHEA-COMP:9658"/>
        <dbReference type="Rhea" id="RHEA-COMP:9673"/>
        <dbReference type="ChEBI" id="CHEBI:30616"/>
        <dbReference type="ChEBI" id="CHEBI:32682"/>
        <dbReference type="ChEBI" id="CHEBI:33019"/>
        <dbReference type="ChEBI" id="CHEBI:78442"/>
        <dbReference type="ChEBI" id="CHEBI:78513"/>
        <dbReference type="ChEBI" id="CHEBI:456215"/>
        <dbReference type="EC" id="6.1.1.19"/>
    </reaction>
</comment>
<comment type="subunit">
    <text evidence="1">Monomer.</text>
</comment>
<comment type="subcellular location">
    <subcellularLocation>
        <location evidence="1">Cytoplasm</location>
    </subcellularLocation>
</comment>
<comment type="similarity">
    <text evidence="1">Belongs to the class-I aminoacyl-tRNA synthetase family.</text>
</comment>
<reference key="1">
    <citation type="journal article" date="2002" name="Nature">
        <title>Comparison of the genomes of two Xanthomonas pathogens with differing host specificities.</title>
        <authorList>
            <person name="da Silva A.C.R."/>
            <person name="Ferro J.A."/>
            <person name="Reinach F.C."/>
            <person name="Farah C.S."/>
            <person name="Furlan L.R."/>
            <person name="Quaggio R.B."/>
            <person name="Monteiro-Vitorello C.B."/>
            <person name="Van Sluys M.A."/>
            <person name="Almeida N.F. Jr."/>
            <person name="Alves L.M.C."/>
            <person name="do Amaral A.M."/>
            <person name="Bertolini M.C."/>
            <person name="Camargo L.E.A."/>
            <person name="Camarotte G."/>
            <person name="Cannavan F."/>
            <person name="Cardozo J."/>
            <person name="Chambergo F."/>
            <person name="Ciapina L.P."/>
            <person name="Cicarelli R.M.B."/>
            <person name="Coutinho L.L."/>
            <person name="Cursino-Santos J.R."/>
            <person name="El-Dorry H."/>
            <person name="Faria J.B."/>
            <person name="Ferreira A.J.S."/>
            <person name="Ferreira R.C.C."/>
            <person name="Ferro M.I.T."/>
            <person name="Formighieri E.F."/>
            <person name="Franco M.C."/>
            <person name="Greggio C.C."/>
            <person name="Gruber A."/>
            <person name="Katsuyama A.M."/>
            <person name="Kishi L.T."/>
            <person name="Leite R.P."/>
            <person name="Lemos E.G.M."/>
            <person name="Lemos M.V.F."/>
            <person name="Locali E.C."/>
            <person name="Machado M.A."/>
            <person name="Madeira A.M.B.N."/>
            <person name="Martinez-Rossi N.M."/>
            <person name="Martins E.C."/>
            <person name="Meidanis J."/>
            <person name="Menck C.F.M."/>
            <person name="Miyaki C.Y."/>
            <person name="Moon D.H."/>
            <person name="Moreira L.M."/>
            <person name="Novo M.T.M."/>
            <person name="Okura V.K."/>
            <person name="Oliveira M.C."/>
            <person name="Oliveira V.R."/>
            <person name="Pereira H.A."/>
            <person name="Rossi A."/>
            <person name="Sena J.A.D."/>
            <person name="Silva C."/>
            <person name="de Souza R.F."/>
            <person name="Spinola L.A.F."/>
            <person name="Takita M.A."/>
            <person name="Tamura R.E."/>
            <person name="Teixeira E.C."/>
            <person name="Tezza R.I.D."/>
            <person name="Trindade dos Santos M."/>
            <person name="Truffi D."/>
            <person name="Tsai S.M."/>
            <person name="White F.F."/>
            <person name="Setubal J.C."/>
            <person name="Kitajima J.P."/>
        </authorList>
    </citation>
    <scope>NUCLEOTIDE SEQUENCE [LARGE SCALE GENOMIC DNA]</scope>
    <source>
        <strain>ATCC 33913 / DSM 3586 / NCPPB 528 / LMG 568 / P 25</strain>
    </source>
</reference>